<geneLocation type="chloroplast"/>
<sequence>MSHSVKIYDTCIGCTQCVRACPTDVLEMIPWDGCKAKQIASAPRTEDCVGCKRCESACPTDFLSVRVYLWHETTRSMGLAY</sequence>
<proteinExistence type="inferred from homology"/>
<gene>
    <name evidence="2" type="primary">psaC</name>
</gene>
<organism>
    <name type="scientific">Atropa belladonna</name>
    <name type="common">Belladonna</name>
    <name type="synonym">Deadly nightshade</name>
    <dbReference type="NCBI Taxonomy" id="33113"/>
    <lineage>
        <taxon>Eukaryota</taxon>
        <taxon>Viridiplantae</taxon>
        <taxon>Streptophyta</taxon>
        <taxon>Embryophyta</taxon>
        <taxon>Tracheophyta</taxon>
        <taxon>Spermatophyta</taxon>
        <taxon>Magnoliopsida</taxon>
        <taxon>eudicotyledons</taxon>
        <taxon>Gunneridae</taxon>
        <taxon>Pentapetalae</taxon>
        <taxon>asterids</taxon>
        <taxon>lamiids</taxon>
        <taxon>Solanales</taxon>
        <taxon>Solanaceae</taxon>
        <taxon>Solanoideae</taxon>
        <taxon>Hyoscyameae</taxon>
        <taxon>Atropa</taxon>
    </lineage>
</organism>
<keyword id="KW-0004">4Fe-4S</keyword>
<keyword id="KW-0150">Chloroplast</keyword>
<keyword id="KW-0249">Electron transport</keyword>
<keyword id="KW-0408">Iron</keyword>
<keyword id="KW-0411">Iron-sulfur</keyword>
<keyword id="KW-0472">Membrane</keyword>
<keyword id="KW-0479">Metal-binding</keyword>
<keyword id="KW-0560">Oxidoreductase</keyword>
<keyword id="KW-0602">Photosynthesis</keyword>
<keyword id="KW-0603">Photosystem I</keyword>
<keyword id="KW-0934">Plastid</keyword>
<keyword id="KW-0677">Repeat</keyword>
<keyword id="KW-0793">Thylakoid</keyword>
<keyword id="KW-0813">Transport</keyword>
<accession>P62091</accession>
<accession>P07136</accession>
<accession>P25252</accession>
<accession>Q9MRU0</accession>
<accession>Q9T2J4</accession>
<name>PSAC_ATRBE</name>
<dbReference type="EC" id="1.97.1.12" evidence="2"/>
<dbReference type="EMBL" id="AJ316582">
    <property type="protein sequence ID" value="CAC88097.1"/>
    <property type="molecule type" value="Genomic_DNA"/>
</dbReference>
<dbReference type="RefSeq" id="NP_783283.1">
    <property type="nucleotide sequence ID" value="NC_004561.1"/>
</dbReference>
<dbReference type="SMR" id="P62091"/>
<dbReference type="GeneID" id="806469"/>
<dbReference type="GO" id="GO:0009535">
    <property type="term" value="C:chloroplast thylakoid membrane"/>
    <property type="evidence" value="ECO:0007669"/>
    <property type="project" value="UniProtKB-SubCell"/>
</dbReference>
<dbReference type="GO" id="GO:0009522">
    <property type="term" value="C:photosystem I"/>
    <property type="evidence" value="ECO:0007669"/>
    <property type="project" value="UniProtKB-KW"/>
</dbReference>
<dbReference type="GO" id="GO:0051539">
    <property type="term" value="F:4 iron, 4 sulfur cluster binding"/>
    <property type="evidence" value="ECO:0007669"/>
    <property type="project" value="UniProtKB-KW"/>
</dbReference>
<dbReference type="GO" id="GO:0009055">
    <property type="term" value="F:electron transfer activity"/>
    <property type="evidence" value="ECO:0007669"/>
    <property type="project" value="UniProtKB-UniRule"/>
</dbReference>
<dbReference type="GO" id="GO:0046872">
    <property type="term" value="F:metal ion binding"/>
    <property type="evidence" value="ECO:0007669"/>
    <property type="project" value="UniProtKB-KW"/>
</dbReference>
<dbReference type="GO" id="GO:0016491">
    <property type="term" value="F:oxidoreductase activity"/>
    <property type="evidence" value="ECO:0007669"/>
    <property type="project" value="UniProtKB-KW"/>
</dbReference>
<dbReference type="GO" id="GO:0009773">
    <property type="term" value="P:photosynthetic electron transport in photosystem I"/>
    <property type="evidence" value="ECO:0007669"/>
    <property type="project" value="InterPro"/>
</dbReference>
<dbReference type="FunFam" id="3.30.70.20:FF:000001">
    <property type="entry name" value="Photosystem I iron-sulfur center"/>
    <property type="match status" value="1"/>
</dbReference>
<dbReference type="Gene3D" id="3.30.70.20">
    <property type="match status" value="1"/>
</dbReference>
<dbReference type="HAMAP" id="MF_01303">
    <property type="entry name" value="PSI_PsaC"/>
    <property type="match status" value="1"/>
</dbReference>
<dbReference type="InterPro" id="IPR017896">
    <property type="entry name" value="4Fe4S_Fe-S-bd"/>
</dbReference>
<dbReference type="InterPro" id="IPR017900">
    <property type="entry name" value="4Fe4S_Fe_S_CS"/>
</dbReference>
<dbReference type="InterPro" id="IPR050157">
    <property type="entry name" value="PSI_iron-sulfur_center"/>
</dbReference>
<dbReference type="InterPro" id="IPR017491">
    <property type="entry name" value="PSI_PsaC"/>
</dbReference>
<dbReference type="NCBIfam" id="TIGR03048">
    <property type="entry name" value="PS_I_psaC"/>
    <property type="match status" value="1"/>
</dbReference>
<dbReference type="PANTHER" id="PTHR24960:SF79">
    <property type="entry name" value="PHOTOSYSTEM I IRON-SULFUR CENTER"/>
    <property type="match status" value="1"/>
</dbReference>
<dbReference type="PANTHER" id="PTHR24960">
    <property type="entry name" value="PHOTOSYSTEM I IRON-SULFUR CENTER-RELATED"/>
    <property type="match status" value="1"/>
</dbReference>
<dbReference type="Pfam" id="PF14697">
    <property type="entry name" value="Fer4_21"/>
    <property type="match status" value="1"/>
</dbReference>
<dbReference type="SUPFAM" id="SSF54862">
    <property type="entry name" value="4Fe-4S ferredoxins"/>
    <property type="match status" value="1"/>
</dbReference>
<dbReference type="PROSITE" id="PS00198">
    <property type="entry name" value="4FE4S_FER_1"/>
    <property type="match status" value="2"/>
</dbReference>
<dbReference type="PROSITE" id="PS51379">
    <property type="entry name" value="4FE4S_FER_2"/>
    <property type="match status" value="2"/>
</dbReference>
<reference key="1">
    <citation type="journal article" date="2002" name="Mol. Biol. Evol.">
        <title>The plastid chromosome of Atropa belladonna and its comparison with that of Nicotiana tabacum: the role of RNA editing in generating divergence in the process of plant speciation.</title>
        <authorList>
            <person name="Schmitz-Linneweber C."/>
            <person name="Regel R."/>
            <person name="Du T.G."/>
            <person name="Hupfer H."/>
            <person name="Herrmann R.G."/>
            <person name="Maier R.M."/>
        </authorList>
    </citation>
    <scope>NUCLEOTIDE SEQUENCE [LARGE SCALE GENOMIC DNA]</scope>
    <source>
        <strain>cv. Ab5p(kan)</strain>
    </source>
</reference>
<protein>
    <recommendedName>
        <fullName evidence="2">Photosystem I iron-sulfur center</fullName>
        <ecNumber evidence="2">1.97.1.12</ecNumber>
    </recommendedName>
    <alternativeName>
        <fullName evidence="2">9 kDa polypeptide</fullName>
    </alternativeName>
    <alternativeName>
        <fullName evidence="2">PSI-C</fullName>
    </alternativeName>
    <alternativeName>
        <fullName evidence="2">Photosystem I subunit VII</fullName>
    </alternativeName>
    <alternativeName>
        <fullName evidence="2">PsaC</fullName>
    </alternativeName>
</protein>
<feature type="initiator methionine" description="Removed" evidence="1">
    <location>
        <position position="1"/>
    </location>
</feature>
<feature type="chain" id="PRO_0000061971" description="Photosystem I iron-sulfur center">
    <location>
        <begin position="2"/>
        <end position="81"/>
    </location>
</feature>
<feature type="domain" description="4Fe-4S ferredoxin-type 1" evidence="2">
    <location>
        <begin position="2"/>
        <end position="31"/>
    </location>
</feature>
<feature type="domain" description="4Fe-4S ferredoxin-type 2" evidence="2">
    <location>
        <begin position="39"/>
        <end position="68"/>
    </location>
</feature>
<feature type="binding site" evidence="2">
    <location>
        <position position="11"/>
    </location>
    <ligand>
        <name>[4Fe-4S] cluster</name>
        <dbReference type="ChEBI" id="CHEBI:49883"/>
        <label>1</label>
    </ligand>
</feature>
<feature type="binding site" evidence="2">
    <location>
        <position position="14"/>
    </location>
    <ligand>
        <name>[4Fe-4S] cluster</name>
        <dbReference type="ChEBI" id="CHEBI:49883"/>
        <label>1</label>
    </ligand>
</feature>
<feature type="binding site" evidence="2">
    <location>
        <position position="17"/>
    </location>
    <ligand>
        <name>[4Fe-4S] cluster</name>
        <dbReference type="ChEBI" id="CHEBI:49883"/>
        <label>1</label>
    </ligand>
</feature>
<feature type="binding site" evidence="2">
    <location>
        <position position="21"/>
    </location>
    <ligand>
        <name>[4Fe-4S] cluster</name>
        <dbReference type="ChEBI" id="CHEBI:49883"/>
        <label>2</label>
    </ligand>
</feature>
<feature type="binding site" evidence="2">
    <location>
        <position position="48"/>
    </location>
    <ligand>
        <name>[4Fe-4S] cluster</name>
        <dbReference type="ChEBI" id="CHEBI:49883"/>
        <label>2</label>
    </ligand>
</feature>
<feature type="binding site" evidence="2">
    <location>
        <position position="51"/>
    </location>
    <ligand>
        <name>[4Fe-4S] cluster</name>
        <dbReference type="ChEBI" id="CHEBI:49883"/>
        <label>2</label>
    </ligand>
</feature>
<feature type="binding site" evidence="2">
    <location>
        <position position="54"/>
    </location>
    <ligand>
        <name>[4Fe-4S] cluster</name>
        <dbReference type="ChEBI" id="CHEBI:49883"/>
        <label>2</label>
    </ligand>
</feature>
<feature type="binding site" evidence="2">
    <location>
        <position position="58"/>
    </location>
    <ligand>
        <name>[4Fe-4S] cluster</name>
        <dbReference type="ChEBI" id="CHEBI:49883"/>
        <label>1</label>
    </ligand>
</feature>
<comment type="function">
    <text evidence="2">Apoprotein for the two 4Fe-4S centers FA and FB of photosystem I (PSI); essential for photochemical activity. FB is the terminal electron acceptor of PSI, donating electrons to ferredoxin. The C-terminus interacts with PsaA/B/D and helps assemble the protein into the PSI complex. Required for binding of PsaD and PsaE to PSI. PSI is a plastocyanin-ferredoxin oxidoreductase, converting photonic excitation into a charge separation, which transfers an electron from the donor P700 chlorophyll pair to the spectroscopically characterized acceptors A0, A1, FX, FA and FB in turn.</text>
</comment>
<comment type="catalytic activity">
    <reaction evidence="2">
        <text>reduced [plastocyanin] + hnu + oxidized [2Fe-2S]-[ferredoxin] = oxidized [plastocyanin] + reduced [2Fe-2S]-[ferredoxin]</text>
        <dbReference type="Rhea" id="RHEA:30407"/>
        <dbReference type="Rhea" id="RHEA-COMP:10000"/>
        <dbReference type="Rhea" id="RHEA-COMP:10001"/>
        <dbReference type="Rhea" id="RHEA-COMP:10039"/>
        <dbReference type="Rhea" id="RHEA-COMP:10040"/>
        <dbReference type="ChEBI" id="CHEBI:29036"/>
        <dbReference type="ChEBI" id="CHEBI:30212"/>
        <dbReference type="ChEBI" id="CHEBI:33737"/>
        <dbReference type="ChEBI" id="CHEBI:33738"/>
        <dbReference type="ChEBI" id="CHEBI:49552"/>
        <dbReference type="EC" id="1.97.1.12"/>
    </reaction>
</comment>
<comment type="cofactor">
    <cofactor evidence="2">
        <name>[4Fe-4S] cluster</name>
        <dbReference type="ChEBI" id="CHEBI:49883"/>
    </cofactor>
    <text evidence="2">Binds 2 [4Fe-4S] clusters. Cluster 2 is most probably the spectroscopically characterized electron acceptor FA and cluster 1 is most probably FB.</text>
</comment>
<comment type="subunit">
    <text evidence="2">The eukaryotic PSI reaction center is composed of at least 11 subunits.</text>
</comment>
<comment type="subcellular location">
    <subcellularLocation>
        <location evidence="2">Plastid</location>
        <location evidence="2">Chloroplast thylakoid membrane</location>
        <topology evidence="2">Peripheral membrane protein</topology>
        <orientation evidence="2">Stromal side</orientation>
    </subcellularLocation>
</comment>
<evidence type="ECO:0000250" key="1"/>
<evidence type="ECO:0000255" key="2">
    <source>
        <dbReference type="HAMAP-Rule" id="MF_01303"/>
    </source>
</evidence>